<gene>
    <name type="primary">RAET1L</name>
    <name evidence="8" type="synonym">ULBP6</name>
</gene>
<accession>Q5VY80</accession>
<accession>A3KME4</accession>
<accession>Q8TE74</accession>
<organism>
    <name type="scientific">Homo sapiens</name>
    <name type="common">Human</name>
    <dbReference type="NCBI Taxonomy" id="9606"/>
    <lineage>
        <taxon>Eukaryota</taxon>
        <taxon>Metazoa</taxon>
        <taxon>Chordata</taxon>
        <taxon>Craniata</taxon>
        <taxon>Vertebrata</taxon>
        <taxon>Euteleostomi</taxon>
        <taxon>Mammalia</taxon>
        <taxon>Eutheria</taxon>
        <taxon>Euarchontoglires</taxon>
        <taxon>Primates</taxon>
        <taxon>Haplorrhini</taxon>
        <taxon>Catarrhini</taxon>
        <taxon>Hominidae</taxon>
        <taxon>Homo</taxon>
    </lineage>
</organism>
<comment type="function">
    <text evidence="6 7">Binds and activates the KLRK1/NKG2D receptor, mediating natural killer cell cytotoxicity.</text>
</comment>
<comment type="subunit">
    <text evidence="6 7">Interacts with KLRK1/NKG2D.</text>
</comment>
<comment type="subunit">
    <text evidence="6">(Microbial infection) In CMV-infected cells, interacts with the viral glycoprotein UL16; this interaction causes relocalization from the cell surface to the cytoplasm and prevents binding to and activation of KLRK1/NKG2D, providing CMV with an immune evasion mechanism.</text>
</comment>
<comment type="interaction">
    <interactant intactId="EBI-16364752">
        <id>Q5VY80</id>
    </interactant>
    <interactant intactId="EBI-458344">
        <id>P26718</id>
        <label>KLRK1</label>
    </interactant>
    <organismsDiffer>false</organismsDiffer>
    <experiments>4</experiments>
</comment>
<comment type="interaction">
    <interactant intactId="EBI-16364752">
        <id>Q5VY80</id>
    </interactant>
    <interactant intactId="EBI-11956541">
        <id>Q9GZY8-5</id>
        <label>MFF</label>
    </interactant>
    <organismsDiffer>false</organismsDiffer>
    <experiments>3</experiments>
</comment>
<comment type="interaction">
    <interactant intactId="EBI-16364752">
        <id>Q5VY80</id>
    </interactant>
    <interactant intactId="EBI-751210">
        <id>Q96EC8</id>
        <label>YIPF6</label>
    </interactant>
    <organismsDiffer>false</organismsDiffer>
    <experiments>3</experiments>
</comment>
<comment type="subcellular location">
    <subcellularLocation>
        <location evidence="6">Cell membrane</location>
        <topology evidence="6">Lipid-anchor</topology>
        <topology evidence="6">GPI-anchor</topology>
    </subcellularLocation>
    <subcellularLocation>
        <location evidence="2">Endoplasmic reticulum</location>
    </subcellularLocation>
    <text evidence="6">In CMV-infected fibroblasts, detected intracellularly.</text>
</comment>
<comment type="tissue specificity">
    <text evidence="4 6 7">Widely expressed (PubMed:11827464). Expressed in trachea (PubMed:19658097). Constitutively expressed in peripheral blood mononuclear cells, including B-cells and natural killer cells, as well as CD4+ and CD8+ T-cells and monocytes. Tends to be up-regulated in various lymphoid malignancies, including chronic lymphocytic leukemia (PubMed:28559451).</text>
</comment>
<comment type="polymorphism">
    <text evidence="6 7">4 alleles have been identified in 32 Caucasian individuals: ULBP6*01 (frequency 0.483), ULBP6*02 (frequency 0.424), ULBP6*03 (frequency 0.069) and ULBP6*04 (frequency 0.024). The sequence shown is that of ULBP6*03 (PubMed:19658097). Allele ULBP6*02 has a much higher affinity for KLRK1/NKG2D than allele ULBP6*01, but elicits less-efficient cytotoxicity. This high binding affinity and limited functional potency may depend upon the presence of the Leu residue at position 106 (PubMed:28559451).</text>
</comment>
<comment type="miscellaneous">
    <text>UL16-binding proteins (ULBPs) are unusual members of the extended MHC class I superfamily. They do not contain the alpha 3 domain and lack a transmembrane domain.</text>
</comment>
<comment type="similarity">
    <text evidence="9">Belongs to the MHC class I family.</text>
</comment>
<evidence type="ECO:0000250" key="1"/>
<evidence type="ECO:0000250" key="2">
    <source>
        <dbReference type="UniProtKB" id="Q9BZM6"/>
    </source>
</evidence>
<evidence type="ECO:0000255" key="3"/>
<evidence type="ECO:0000269" key="4">
    <source>
    </source>
</evidence>
<evidence type="ECO:0000269" key="5">
    <source>
    </source>
</evidence>
<evidence type="ECO:0000269" key="6">
    <source>
    </source>
</evidence>
<evidence type="ECO:0000269" key="7">
    <source>
    </source>
</evidence>
<evidence type="ECO:0000303" key="8">
    <source>
    </source>
</evidence>
<evidence type="ECO:0000305" key="9"/>
<evidence type="ECO:0007744" key="10">
    <source>
        <dbReference type="PDB" id="4S0U"/>
    </source>
</evidence>
<evidence type="ECO:0007829" key="11">
    <source>
        <dbReference type="PDB" id="4S0U"/>
    </source>
</evidence>
<dbReference type="EMBL" id="AY039682">
    <property type="protein sequence ID" value="AAK91503.1"/>
    <property type="molecule type" value="mRNA"/>
</dbReference>
<dbReference type="EMBL" id="AL355497">
    <property type="status" value="NOT_ANNOTATED_CDS"/>
    <property type="molecule type" value="Genomic_DNA"/>
</dbReference>
<dbReference type="EMBL" id="BC131600">
    <property type="protein sequence ID" value="AAI31601.1"/>
    <property type="molecule type" value="mRNA"/>
</dbReference>
<dbReference type="CCDS" id="CCDS5224.1"/>
<dbReference type="RefSeq" id="NP_570970.2">
    <property type="nucleotide sequence ID" value="NM_130900.3"/>
</dbReference>
<dbReference type="RefSeq" id="XP_011533788.1">
    <property type="nucleotide sequence ID" value="XM_011535486.2"/>
</dbReference>
<dbReference type="PDB" id="4S0U">
    <property type="method" value="X-ray"/>
    <property type="resolution" value="2.35 A"/>
    <property type="chains" value="C=29-203"/>
</dbReference>
<dbReference type="PDB" id="8RWB">
    <property type="method" value="X-ray"/>
    <property type="resolution" value="2.31 A"/>
    <property type="chains" value="P=29-200"/>
</dbReference>
<dbReference type="PDBsum" id="4S0U"/>
<dbReference type="PDBsum" id="8RWB"/>
<dbReference type="SMR" id="Q5VY80"/>
<dbReference type="BioGRID" id="127532">
    <property type="interactions" value="14"/>
</dbReference>
<dbReference type="FunCoup" id="Q5VY80">
    <property type="interactions" value="169"/>
</dbReference>
<dbReference type="IntAct" id="Q5VY80">
    <property type="interactions" value="14"/>
</dbReference>
<dbReference type="STRING" id="9606.ENSP00000356310"/>
<dbReference type="ChEMBL" id="CHEMBL5483006"/>
<dbReference type="GlyCosmos" id="Q5VY80">
    <property type="glycosylation" value="2 sites, No reported glycans"/>
</dbReference>
<dbReference type="GlyGen" id="Q5VY80">
    <property type="glycosylation" value="3 sites, 2 N-linked glycans (2 sites)"/>
</dbReference>
<dbReference type="iPTMnet" id="Q5VY80"/>
<dbReference type="PhosphoSitePlus" id="Q5VY80"/>
<dbReference type="BioMuta" id="RAET1L"/>
<dbReference type="DMDM" id="74747619"/>
<dbReference type="jPOST" id="Q5VY80"/>
<dbReference type="MassIVE" id="Q5VY80"/>
<dbReference type="PaxDb" id="9606-ENSP00000356310"/>
<dbReference type="PeptideAtlas" id="Q5VY80"/>
<dbReference type="Pumba" id="Q5VY80"/>
<dbReference type="Antibodypedia" id="77385">
    <property type="antibodies" value="4 antibodies from 3 providers"/>
</dbReference>
<dbReference type="DNASU" id="154064"/>
<dbReference type="Ensembl" id="ENST00000286380.2">
    <property type="protein sequence ID" value="ENSP00000286380.2"/>
    <property type="gene ID" value="ENSG00000155918.8"/>
</dbReference>
<dbReference type="Ensembl" id="ENST00000367341.6">
    <property type="protein sequence ID" value="ENSP00000356310.1"/>
    <property type="gene ID" value="ENSG00000155918.8"/>
</dbReference>
<dbReference type="GeneID" id="154064"/>
<dbReference type="KEGG" id="hsa:154064"/>
<dbReference type="MANE-Select" id="ENST00000367341.6">
    <property type="protein sequence ID" value="ENSP00000356310.1"/>
    <property type="RefSeq nucleotide sequence ID" value="NM_130900.3"/>
    <property type="RefSeq protein sequence ID" value="NP_570970.2"/>
</dbReference>
<dbReference type="UCSC" id="uc011eei.2">
    <property type="organism name" value="human"/>
</dbReference>
<dbReference type="AGR" id="HGNC:16798"/>
<dbReference type="CTD" id="154064"/>
<dbReference type="DisGeNET" id="154064"/>
<dbReference type="GeneCards" id="RAET1L"/>
<dbReference type="HGNC" id="HGNC:16798">
    <property type="gene designation" value="RAET1L"/>
</dbReference>
<dbReference type="HPA" id="ENSG00000155918">
    <property type="expression patterns" value="Group enriched (esophagus, vagina)"/>
</dbReference>
<dbReference type="MIM" id="611047">
    <property type="type" value="gene"/>
</dbReference>
<dbReference type="neXtProt" id="NX_Q5VY80"/>
<dbReference type="OpenTargets" id="ENSG00000155918"/>
<dbReference type="PharmGKB" id="PA134918665"/>
<dbReference type="VEuPathDB" id="HostDB:ENSG00000155918"/>
<dbReference type="eggNOG" id="ENOG502TM6M">
    <property type="taxonomic scope" value="Eukaryota"/>
</dbReference>
<dbReference type="GeneTree" id="ENSGT01130000278293"/>
<dbReference type="HOGENOM" id="CLU_086235_0_0_1"/>
<dbReference type="InParanoid" id="Q5VY80"/>
<dbReference type="OMA" id="SGICDPH"/>
<dbReference type="OrthoDB" id="9836934at2759"/>
<dbReference type="PAN-GO" id="Q5VY80">
    <property type="GO annotations" value="3 GO annotations based on evolutionary models"/>
</dbReference>
<dbReference type="PhylomeDB" id="Q5VY80"/>
<dbReference type="TreeFam" id="TF341724"/>
<dbReference type="PathwayCommons" id="Q5VY80"/>
<dbReference type="Reactome" id="R-HSA-163125">
    <property type="pathway name" value="Post-translational modification: synthesis of GPI-anchored proteins"/>
</dbReference>
<dbReference type="SignaLink" id="Q5VY80"/>
<dbReference type="BioGRID-ORCS" id="154064">
    <property type="hits" value="14 hits in 1067 CRISPR screens"/>
</dbReference>
<dbReference type="GenomeRNAi" id="154064"/>
<dbReference type="Pharos" id="Q5VY80">
    <property type="development level" value="Tbio"/>
</dbReference>
<dbReference type="PRO" id="PR:Q5VY80"/>
<dbReference type="Proteomes" id="UP000005640">
    <property type="component" value="Chromosome 6"/>
</dbReference>
<dbReference type="RNAct" id="Q5VY80">
    <property type="molecule type" value="protein"/>
</dbReference>
<dbReference type="Bgee" id="ENSG00000155918">
    <property type="expression patterns" value="Expressed in lower esophagus mucosa and 37 other cell types or tissues"/>
</dbReference>
<dbReference type="GO" id="GO:0005783">
    <property type="term" value="C:endoplasmic reticulum"/>
    <property type="evidence" value="ECO:0007669"/>
    <property type="project" value="UniProtKB-SubCell"/>
</dbReference>
<dbReference type="GO" id="GO:0009897">
    <property type="term" value="C:external side of plasma membrane"/>
    <property type="evidence" value="ECO:0000318"/>
    <property type="project" value="GO_Central"/>
</dbReference>
<dbReference type="GO" id="GO:0005576">
    <property type="term" value="C:extracellular region"/>
    <property type="evidence" value="ECO:0000304"/>
    <property type="project" value="Reactome"/>
</dbReference>
<dbReference type="GO" id="GO:0005615">
    <property type="term" value="C:extracellular space"/>
    <property type="evidence" value="ECO:0000318"/>
    <property type="project" value="GO_Central"/>
</dbReference>
<dbReference type="GO" id="GO:0043231">
    <property type="term" value="C:intracellular membrane-bounded organelle"/>
    <property type="evidence" value="ECO:0000314"/>
    <property type="project" value="HPA"/>
</dbReference>
<dbReference type="GO" id="GO:0005886">
    <property type="term" value="C:plasma membrane"/>
    <property type="evidence" value="ECO:0000314"/>
    <property type="project" value="HPA"/>
</dbReference>
<dbReference type="GO" id="GO:0002486">
    <property type="term" value="P:antigen processing and presentation of endogenous peptide antigen via MHC class I via ER pathway, TAP-independent"/>
    <property type="evidence" value="ECO:0000318"/>
    <property type="project" value="GO_Central"/>
</dbReference>
<dbReference type="GO" id="GO:0002476">
    <property type="term" value="P:antigen processing and presentation of endogenous peptide antigen via MHC class Ib"/>
    <property type="evidence" value="ECO:0000318"/>
    <property type="project" value="GO_Central"/>
</dbReference>
<dbReference type="GO" id="GO:0006955">
    <property type="term" value="P:immune response"/>
    <property type="evidence" value="ECO:0000318"/>
    <property type="project" value="GO_Central"/>
</dbReference>
<dbReference type="GO" id="GO:0001916">
    <property type="term" value="P:positive regulation of T cell mediated cytotoxicity"/>
    <property type="evidence" value="ECO:0000318"/>
    <property type="project" value="GO_Central"/>
</dbReference>
<dbReference type="FunFam" id="3.30.500.10:FF:000004">
    <property type="entry name" value="Retinoic acid early-inducible protein 1-beta"/>
    <property type="match status" value="1"/>
</dbReference>
<dbReference type="Gene3D" id="3.30.500.10">
    <property type="entry name" value="MHC class I-like antigen recognition-like"/>
    <property type="match status" value="1"/>
</dbReference>
<dbReference type="InterPro" id="IPR050208">
    <property type="entry name" value="MHC_class-I_related"/>
</dbReference>
<dbReference type="InterPro" id="IPR011161">
    <property type="entry name" value="MHC_I-like_Ag-recog"/>
</dbReference>
<dbReference type="InterPro" id="IPR037055">
    <property type="entry name" value="MHC_I-like_Ag-recog_sf"/>
</dbReference>
<dbReference type="InterPro" id="IPR011162">
    <property type="entry name" value="MHC_I/II-like_Ag-recog"/>
</dbReference>
<dbReference type="PANTHER" id="PTHR16675">
    <property type="entry name" value="MHC CLASS I-RELATED"/>
    <property type="match status" value="1"/>
</dbReference>
<dbReference type="PANTHER" id="PTHR16675:SF148">
    <property type="entry name" value="UL16-BINDING PROTEIN 2-RELATED"/>
    <property type="match status" value="1"/>
</dbReference>
<dbReference type="Pfam" id="PF00129">
    <property type="entry name" value="MHC_I"/>
    <property type="match status" value="1"/>
</dbReference>
<dbReference type="SUPFAM" id="SSF54452">
    <property type="entry name" value="MHC antigen-recognition domain"/>
    <property type="match status" value="1"/>
</dbReference>
<reference key="1">
    <citation type="journal article" date="2002" name="Genomics">
        <title>A cluster of ten novel MHC class I related genes on human chromosome 6q24.2-q25.3.</title>
        <authorList>
            <person name="Radosavljevic M."/>
            <person name="Cuillerier B."/>
            <person name="Wilson M.J."/>
            <person name="Clement O."/>
            <person name="Wicker S."/>
            <person name="Gilfillan S."/>
            <person name="Beck S."/>
            <person name="Trowsdale J."/>
            <person name="Bahram S."/>
        </authorList>
    </citation>
    <scope>NUCLEOTIDE SEQUENCE [MRNA]</scope>
    <scope>TISSUE SPECIFICITY</scope>
    <scope>VARIANT THR-85</scope>
</reference>
<reference key="2">
    <citation type="journal article" date="2003" name="Nature">
        <title>The DNA sequence and analysis of human chromosome 6.</title>
        <authorList>
            <person name="Mungall A.J."/>
            <person name="Palmer S.A."/>
            <person name="Sims S.K."/>
            <person name="Edwards C.A."/>
            <person name="Ashurst J.L."/>
            <person name="Wilming L."/>
            <person name="Jones M.C."/>
            <person name="Horton R."/>
            <person name="Hunt S.E."/>
            <person name="Scott C.E."/>
            <person name="Gilbert J.G.R."/>
            <person name="Clamp M.E."/>
            <person name="Bethel G."/>
            <person name="Milne S."/>
            <person name="Ainscough R."/>
            <person name="Almeida J.P."/>
            <person name="Ambrose K.D."/>
            <person name="Andrews T.D."/>
            <person name="Ashwell R.I.S."/>
            <person name="Babbage A.K."/>
            <person name="Bagguley C.L."/>
            <person name="Bailey J."/>
            <person name="Banerjee R."/>
            <person name="Barker D.J."/>
            <person name="Barlow K.F."/>
            <person name="Bates K."/>
            <person name="Beare D.M."/>
            <person name="Beasley H."/>
            <person name="Beasley O."/>
            <person name="Bird C.P."/>
            <person name="Blakey S.E."/>
            <person name="Bray-Allen S."/>
            <person name="Brook J."/>
            <person name="Brown A.J."/>
            <person name="Brown J.Y."/>
            <person name="Burford D.C."/>
            <person name="Burrill W."/>
            <person name="Burton J."/>
            <person name="Carder C."/>
            <person name="Carter N.P."/>
            <person name="Chapman J.C."/>
            <person name="Clark S.Y."/>
            <person name="Clark G."/>
            <person name="Clee C.M."/>
            <person name="Clegg S."/>
            <person name="Cobley V."/>
            <person name="Collier R.E."/>
            <person name="Collins J.E."/>
            <person name="Colman L.K."/>
            <person name="Corby N.R."/>
            <person name="Coville G.J."/>
            <person name="Culley K.M."/>
            <person name="Dhami P."/>
            <person name="Davies J."/>
            <person name="Dunn M."/>
            <person name="Earthrowl M.E."/>
            <person name="Ellington A.E."/>
            <person name="Evans K.A."/>
            <person name="Faulkner L."/>
            <person name="Francis M.D."/>
            <person name="Frankish A."/>
            <person name="Frankland J."/>
            <person name="French L."/>
            <person name="Garner P."/>
            <person name="Garnett J."/>
            <person name="Ghori M.J."/>
            <person name="Gilby L.M."/>
            <person name="Gillson C.J."/>
            <person name="Glithero R.J."/>
            <person name="Grafham D.V."/>
            <person name="Grant M."/>
            <person name="Gribble S."/>
            <person name="Griffiths C."/>
            <person name="Griffiths M.N.D."/>
            <person name="Hall R."/>
            <person name="Halls K.S."/>
            <person name="Hammond S."/>
            <person name="Harley J.L."/>
            <person name="Hart E.A."/>
            <person name="Heath P.D."/>
            <person name="Heathcott R."/>
            <person name="Holmes S.J."/>
            <person name="Howden P.J."/>
            <person name="Howe K.L."/>
            <person name="Howell G.R."/>
            <person name="Huckle E."/>
            <person name="Humphray S.J."/>
            <person name="Humphries M.D."/>
            <person name="Hunt A.R."/>
            <person name="Johnson C.M."/>
            <person name="Joy A.A."/>
            <person name="Kay M."/>
            <person name="Keenan S.J."/>
            <person name="Kimberley A.M."/>
            <person name="King A."/>
            <person name="Laird G.K."/>
            <person name="Langford C."/>
            <person name="Lawlor S."/>
            <person name="Leongamornlert D.A."/>
            <person name="Leversha M."/>
            <person name="Lloyd C.R."/>
            <person name="Lloyd D.M."/>
            <person name="Loveland J.E."/>
            <person name="Lovell J."/>
            <person name="Martin S."/>
            <person name="Mashreghi-Mohammadi M."/>
            <person name="Maslen G.L."/>
            <person name="Matthews L."/>
            <person name="McCann O.T."/>
            <person name="McLaren S.J."/>
            <person name="McLay K."/>
            <person name="McMurray A."/>
            <person name="Moore M.J.F."/>
            <person name="Mullikin J.C."/>
            <person name="Niblett D."/>
            <person name="Nickerson T."/>
            <person name="Novik K.L."/>
            <person name="Oliver K."/>
            <person name="Overton-Larty E.K."/>
            <person name="Parker A."/>
            <person name="Patel R."/>
            <person name="Pearce A.V."/>
            <person name="Peck A.I."/>
            <person name="Phillimore B.J.C.T."/>
            <person name="Phillips S."/>
            <person name="Plumb R.W."/>
            <person name="Porter K.M."/>
            <person name="Ramsey Y."/>
            <person name="Ranby S.A."/>
            <person name="Rice C.M."/>
            <person name="Ross M.T."/>
            <person name="Searle S.M."/>
            <person name="Sehra H.K."/>
            <person name="Sheridan E."/>
            <person name="Skuce C.D."/>
            <person name="Smith S."/>
            <person name="Smith M."/>
            <person name="Spraggon L."/>
            <person name="Squares S.L."/>
            <person name="Steward C.A."/>
            <person name="Sycamore N."/>
            <person name="Tamlyn-Hall G."/>
            <person name="Tester J."/>
            <person name="Theaker A.J."/>
            <person name="Thomas D.W."/>
            <person name="Thorpe A."/>
            <person name="Tracey A."/>
            <person name="Tromans A."/>
            <person name="Tubby B."/>
            <person name="Wall M."/>
            <person name="Wallis J.M."/>
            <person name="West A.P."/>
            <person name="White S.S."/>
            <person name="Whitehead S.L."/>
            <person name="Whittaker H."/>
            <person name="Wild A."/>
            <person name="Willey D.J."/>
            <person name="Wilmer T.E."/>
            <person name="Wood J.M."/>
            <person name="Wray P.W."/>
            <person name="Wyatt J.C."/>
            <person name="Young L."/>
            <person name="Younger R.M."/>
            <person name="Bentley D.R."/>
            <person name="Coulson A."/>
            <person name="Durbin R.M."/>
            <person name="Hubbard T."/>
            <person name="Sulston J.E."/>
            <person name="Dunham I."/>
            <person name="Rogers J."/>
            <person name="Beck S."/>
        </authorList>
    </citation>
    <scope>NUCLEOTIDE SEQUENCE [LARGE SCALE GENOMIC DNA]</scope>
</reference>
<reference key="3">
    <citation type="journal article" date="2004" name="Genome Res.">
        <title>The status, quality, and expansion of the NIH full-length cDNA project: the Mammalian Gene Collection (MGC).</title>
        <authorList>
            <consortium name="The MGC Project Team"/>
        </authorList>
    </citation>
    <scope>NUCLEOTIDE SEQUENCE [LARGE SCALE MRNA] OF 4-246</scope>
    <scope>VARIANT THR-85</scope>
</reference>
<reference key="4">
    <citation type="journal article" date="2009" name="Eur. J. Immunol.">
        <title>ULBP6/RAET1L is an additional human NKG2D ligand.</title>
        <authorList>
            <person name="Eagle R.A."/>
            <person name="Traherne J.A."/>
            <person name="Hair J.R."/>
            <person name="Jafferji I."/>
            <person name="Trowsdale J."/>
        </authorList>
    </citation>
    <scope>VARIANTS GLY-26; THR-85; ARG-106 AND ILE-147</scope>
    <scope>FUNCTION</scope>
    <scope>INTERACTION WITH KLRK1 AND CMV UL16</scope>
    <scope>SUBCELLULAR LOCATION</scope>
    <scope>TISSUE SPECIFICITY</scope>
</reference>
<reference evidence="10" key="5">
    <citation type="journal article" date="2017" name="Sci. Signal.">
        <title>A disease-linked ULBP6 polymorphism inhibits NKG2D-mediated target cell killing by enhancing the stability of NKG2D ligand binding.</title>
        <authorList>
            <person name="Zuo J."/>
            <person name="Willcox C.R."/>
            <person name="Mohammed F."/>
            <person name="Davey M."/>
            <person name="Hunter S."/>
            <person name="Khan K."/>
            <person name="Antoun A."/>
            <person name="Katakia P."/>
            <person name="Croudace J."/>
            <person name="Inman C."/>
            <person name="Parry H."/>
            <person name="Briggs D."/>
            <person name="Malladi R."/>
            <person name="Willcox B.E."/>
            <person name="Moss P."/>
        </authorList>
    </citation>
    <scope>X-RAY CRYSTALLOGRAPHY (2.35 ANGSTROMS) OF 29-203 IN COMPLEX WITH KLRK1</scope>
    <scope>VARIANTS GLY-26; THR-85; ARG-106 AND ILE-147</scope>
    <scope>CHARACTERIZATION OF ALLELES ULBP6*01 AND ULBP6*02</scope>
    <scope>INTERACTION WITH KLRK1</scope>
    <scope>TISSUE SPECIFICITY</scope>
</reference>
<sequence>MAAAAIPALLLCLPLLFLLFGWSRARRDDPHSLCYDITVIPKFRPGPRWCAVQGQVDEKTFLHYDCGNKTVTPVSPLGKKLNVTMAWKAQNPVLREVVDILTEQLLDIQLENYTPKEPLTLQARMSCEQKAEGHSSGSWQFSIDGQTFLLFDSEKRMWTTVHPGARKMKEKWENDKDVAMSFHYISMGDCIGWLEDFLMGMDSTLEPSAGAPLAMSSGTTQLRATATTLILCCLLIILPCFILPGI</sequence>
<keyword id="KW-0002">3D-structure</keyword>
<keyword id="KW-1003">Cell membrane</keyword>
<keyword id="KW-1015">Disulfide bond</keyword>
<keyword id="KW-0256">Endoplasmic reticulum</keyword>
<keyword id="KW-0325">Glycoprotein</keyword>
<keyword id="KW-0336">GPI-anchor</keyword>
<keyword id="KW-0945">Host-virus interaction</keyword>
<keyword id="KW-0391">Immunity</keyword>
<keyword id="KW-0449">Lipoprotein</keyword>
<keyword id="KW-0472">Membrane</keyword>
<keyword id="KW-1185">Reference proteome</keyword>
<keyword id="KW-0732">Signal</keyword>
<proteinExistence type="evidence at protein level"/>
<protein>
    <recommendedName>
        <fullName evidence="8">UL16-binding protein 6</fullName>
    </recommendedName>
    <alternativeName>
        <fullName>Retinoic acid early transcript 1L protein</fullName>
    </alternativeName>
</protein>
<feature type="signal peptide" evidence="3">
    <location>
        <begin position="1"/>
        <end position="25"/>
    </location>
</feature>
<feature type="chain" id="PRO_0000320324" description="UL16-binding protein 6">
    <location>
        <begin position="26"/>
        <end position="218"/>
    </location>
</feature>
<feature type="propeptide" id="PRO_0000320325" description="Removed in mature form" evidence="1">
    <location>
        <begin position="219"/>
        <end position="246"/>
    </location>
</feature>
<feature type="region of interest" description="MHC class I alpha-1 like" evidence="1">
    <location>
        <begin position="29"/>
        <end position="117"/>
    </location>
</feature>
<feature type="region of interest" description="MHC class I alpha-2 like" evidence="1">
    <location>
        <begin position="118"/>
        <end position="210"/>
    </location>
</feature>
<feature type="lipid moiety-binding region" description="GPI-anchor amidated glycine" evidence="1">
    <location>
        <position position="218"/>
    </location>
</feature>
<feature type="glycosylation site" description="N-linked (GlcNAc...) asparagine" evidence="3">
    <location>
        <position position="68"/>
    </location>
</feature>
<feature type="glycosylation site" description="N-linked (GlcNAc...) asparagine" evidence="3">
    <location>
        <position position="82"/>
    </location>
</feature>
<feature type="disulfide bond" evidence="1">
    <location>
        <begin position="50"/>
        <end position="66"/>
    </location>
</feature>
<feature type="disulfide bond" evidence="1">
    <location>
        <begin position="127"/>
        <end position="190"/>
    </location>
</feature>
<feature type="sequence variant" id="VAR_039183" description="In allele ULBP6*01 and allele ULBP6*04; dbSNP:rs1543547." evidence="6 7">
    <original>R</original>
    <variation>G</variation>
    <location>
        <position position="26"/>
    </location>
</feature>
<feature type="sequence variant" id="VAR_039184" description="In allele ULBP6*01, allele ULBP6*02 and allele ULBP6*04; dbSNP:rs912565." evidence="4 5 6 7">
    <original>M</original>
    <variation>T</variation>
    <location>
        <position position="85"/>
    </location>
</feature>
<feature type="sequence variant" id="VAR_039185" description="In allele ULBP6*01; affects KLRK1-binding affinity and KLRK1-mediated cytotoxic response; dbSNP:rs1555696." evidence="6 7">
    <original>L</original>
    <variation>R</variation>
    <location>
        <position position="106"/>
    </location>
</feature>
<feature type="sequence variant" id="VAR_079132" description="In allele ULBP6*01; no effect on KLRK1-binding affinity; dbSNP:rs61730071." evidence="6 7">
    <original>T</original>
    <variation>I</variation>
    <location>
        <position position="147"/>
    </location>
</feature>
<feature type="strand" evidence="11">
    <location>
        <begin position="31"/>
        <end position="39"/>
    </location>
</feature>
<feature type="helix" evidence="11">
    <location>
        <begin position="41"/>
        <end position="43"/>
    </location>
</feature>
<feature type="helix" evidence="11">
    <location>
        <begin position="47"/>
        <end position="49"/>
    </location>
</feature>
<feature type="strand" evidence="11">
    <location>
        <begin position="50"/>
        <end position="56"/>
    </location>
</feature>
<feature type="strand" evidence="11">
    <location>
        <begin position="59"/>
        <end position="65"/>
    </location>
</feature>
<feature type="helix" evidence="11">
    <location>
        <begin position="77"/>
        <end position="81"/>
    </location>
</feature>
<feature type="helix" evidence="11">
    <location>
        <begin position="86"/>
        <end position="106"/>
    </location>
</feature>
<feature type="strand" evidence="11">
    <location>
        <begin position="121"/>
        <end position="129"/>
    </location>
</feature>
<feature type="strand" evidence="11">
    <location>
        <begin position="131"/>
        <end position="133"/>
    </location>
</feature>
<feature type="strand" evidence="11">
    <location>
        <begin position="135"/>
        <end position="143"/>
    </location>
</feature>
<feature type="strand" evidence="11">
    <location>
        <begin position="146"/>
        <end position="152"/>
    </location>
</feature>
<feature type="turn" evidence="11">
    <location>
        <begin position="153"/>
        <end position="156"/>
    </location>
</feature>
<feature type="strand" evidence="11">
    <location>
        <begin position="157"/>
        <end position="163"/>
    </location>
</feature>
<feature type="helix" evidence="11">
    <location>
        <begin position="166"/>
        <end position="174"/>
    </location>
</feature>
<feature type="helix" evidence="11">
    <location>
        <begin position="176"/>
        <end position="187"/>
    </location>
</feature>
<feature type="helix" evidence="11">
    <location>
        <begin position="189"/>
        <end position="202"/>
    </location>
</feature>
<name>ULBP6_HUMAN</name>